<proteinExistence type="inferred from homology"/>
<feature type="chain" id="PRO_0000371120" description="ATP synthase subunit delta">
    <location>
        <begin position="1"/>
        <end position="177"/>
    </location>
</feature>
<dbReference type="EMBL" id="FM200053">
    <property type="protein sequence ID" value="CAR61737.1"/>
    <property type="molecule type" value="Genomic_DNA"/>
</dbReference>
<dbReference type="RefSeq" id="WP_001288957.1">
    <property type="nucleotide sequence ID" value="NC_011147.1"/>
</dbReference>
<dbReference type="SMR" id="B5BIN9"/>
<dbReference type="KEGG" id="sek:SSPA3462"/>
<dbReference type="HOGENOM" id="CLU_085114_3_0_6"/>
<dbReference type="Proteomes" id="UP000001869">
    <property type="component" value="Chromosome"/>
</dbReference>
<dbReference type="GO" id="GO:0005886">
    <property type="term" value="C:plasma membrane"/>
    <property type="evidence" value="ECO:0007669"/>
    <property type="project" value="UniProtKB-SubCell"/>
</dbReference>
<dbReference type="GO" id="GO:0045259">
    <property type="term" value="C:proton-transporting ATP synthase complex"/>
    <property type="evidence" value="ECO:0007669"/>
    <property type="project" value="UniProtKB-KW"/>
</dbReference>
<dbReference type="GO" id="GO:0046933">
    <property type="term" value="F:proton-transporting ATP synthase activity, rotational mechanism"/>
    <property type="evidence" value="ECO:0007669"/>
    <property type="project" value="UniProtKB-UniRule"/>
</dbReference>
<dbReference type="FunFam" id="1.10.520.20:FF:000001">
    <property type="entry name" value="ATP synthase subunit delta"/>
    <property type="match status" value="1"/>
</dbReference>
<dbReference type="Gene3D" id="1.10.520.20">
    <property type="entry name" value="N-terminal domain of the delta subunit of the F1F0-ATP synthase"/>
    <property type="match status" value="1"/>
</dbReference>
<dbReference type="HAMAP" id="MF_01416">
    <property type="entry name" value="ATP_synth_delta_bact"/>
    <property type="match status" value="1"/>
</dbReference>
<dbReference type="InterPro" id="IPR026015">
    <property type="entry name" value="ATP_synth_OSCP/delta_N_sf"/>
</dbReference>
<dbReference type="InterPro" id="IPR020781">
    <property type="entry name" value="ATPase_OSCP/d_CS"/>
</dbReference>
<dbReference type="InterPro" id="IPR000711">
    <property type="entry name" value="ATPase_OSCP/dsu"/>
</dbReference>
<dbReference type="NCBIfam" id="TIGR01145">
    <property type="entry name" value="ATP_synt_delta"/>
    <property type="match status" value="1"/>
</dbReference>
<dbReference type="NCBIfam" id="NF004402">
    <property type="entry name" value="PRK05758.2-2"/>
    <property type="match status" value="1"/>
</dbReference>
<dbReference type="NCBIfam" id="NF004404">
    <property type="entry name" value="PRK05758.2-5"/>
    <property type="match status" value="1"/>
</dbReference>
<dbReference type="PANTHER" id="PTHR11910">
    <property type="entry name" value="ATP SYNTHASE DELTA CHAIN"/>
    <property type="match status" value="1"/>
</dbReference>
<dbReference type="Pfam" id="PF00213">
    <property type="entry name" value="OSCP"/>
    <property type="match status" value="1"/>
</dbReference>
<dbReference type="PRINTS" id="PR00125">
    <property type="entry name" value="ATPASEDELTA"/>
</dbReference>
<dbReference type="SUPFAM" id="SSF47928">
    <property type="entry name" value="N-terminal domain of the delta subunit of the F1F0-ATP synthase"/>
    <property type="match status" value="1"/>
</dbReference>
<dbReference type="PROSITE" id="PS00389">
    <property type="entry name" value="ATPASE_DELTA"/>
    <property type="match status" value="1"/>
</dbReference>
<accession>B5BIN9</accession>
<protein>
    <recommendedName>
        <fullName evidence="1">ATP synthase subunit delta</fullName>
    </recommendedName>
    <alternativeName>
        <fullName evidence="1">ATP synthase F(1) sector subunit delta</fullName>
    </alternativeName>
    <alternativeName>
        <fullName evidence="1">F-type ATPase subunit delta</fullName>
        <shortName evidence="1">F-ATPase subunit delta</shortName>
    </alternativeName>
</protein>
<name>ATPD_SALPK</name>
<organism>
    <name type="scientific">Salmonella paratyphi A (strain AKU_12601)</name>
    <dbReference type="NCBI Taxonomy" id="554290"/>
    <lineage>
        <taxon>Bacteria</taxon>
        <taxon>Pseudomonadati</taxon>
        <taxon>Pseudomonadota</taxon>
        <taxon>Gammaproteobacteria</taxon>
        <taxon>Enterobacterales</taxon>
        <taxon>Enterobacteriaceae</taxon>
        <taxon>Salmonella</taxon>
    </lineage>
</organism>
<keyword id="KW-0066">ATP synthesis</keyword>
<keyword id="KW-0997">Cell inner membrane</keyword>
<keyword id="KW-1003">Cell membrane</keyword>
<keyword id="KW-0139">CF(1)</keyword>
<keyword id="KW-0375">Hydrogen ion transport</keyword>
<keyword id="KW-0406">Ion transport</keyword>
<keyword id="KW-0472">Membrane</keyword>
<keyword id="KW-0813">Transport</keyword>
<gene>
    <name evidence="1" type="primary">atpH</name>
    <name type="ordered locus">SSPA3462</name>
</gene>
<comment type="function">
    <text evidence="1">F(1)F(0) ATP synthase produces ATP from ADP in the presence of a proton or sodium gradient. F-type ATPases consist of two structural domains, F(1) containing the extramembraneous catalytic core and F(0) containing the membrane proton channel, linked together by a central stalk and a peripheral stalk. During catalysis, ATP synthesis in the catalytic domain of F(1) is coupled via a rotary mechanism of the central stalk subunits to proton translocation.</text>
</comment>
<comment type="function">
    <text evidence="1">This protein is part of the stalk that links CF(0) to CF(1). It either transmits conformational changes from CF(0) to CF(1) or is implicated in proton conduction.</text>
</comment>
<comment type="subunit">
    <text evidence="1">F-type ATPases have 2 components, F(1) - the catalytic core - and F(0) - the membrane proton channel. F(1) has five subunits: alpha(3), beta(3), gamma(1), delta(1), epsilon(1). F(0) has three main subunits: a(1), b(2) and c(10-14). The alpha and beta chains form an alternating ring which encloses part of the gamma chain. F(1) is attached to F(0) by a central stalk formed by the gamma and epsilon chains, while a peripheral stalk is formed by the delta and b chains.</text>
</comment>
<comment type="subcellular location">
    <subcellularLocation>
        <location evidence="1">Cell inner membrane</location>
        <topology evidence="1">Peripheral membrane protein</topology>
    </subcellularLocation>
</comment>
<comment type="similarity">
    <text evidence="1">Belongs to the ATPase delta chain family.</text>
</comment>
<evidence type="ECO:0000255" key="1">
    <source>
        <dbReference type="HAMAP-Rule" id="MF_01416"/>
    </source>
</evidence>
<sequence length="177" mass="19412">MSEFVTVARPYAKAAFDFAVEHQSVERWQDMLAFAAEVTKNEQMAELLSGALAPETLAESFIAVCGEQLDENGQNLIRVMAENNRLNALPDVLEQFIHLRAASEATSEVEVTSATALSEEQLSKISAAMEKRLSRKVKLNCKIDKSVMAGVIIRAGDMVIDGSVRGRLERLADVLQS</sequence>
<reference key="1">
    <citation type="journal article" date="2009" name="BMC Genomics">
        <title>Pseudogene accumulation in the evolutionary histories of Salmonella enterica serovars Paratyphi A and Typhi.</title>
        <authorList>
            <person name="Holt K.E."/>
            <person name="Thomson N.R."/>
            <person name="Wain J."/>
            <person name="Langridge G.C."/>
            <person name="Hasan R."/>
            <person name="Bhutta Z.A."/>
            <person name="Quail M.A."/>
            <person name="Norbertczak H."/>
            <person name="Walker D."/>
            <person name="Simmonds M."/>
            <person name="White B."/>
            <person name="Bason N."/>
            <person name="Mungall K."/>
            <person name="Dougan G."/>
            <person name="Parkhill J."/>
        </authorList>
    </citation>
    <scope>NUCLEOTIDE SEQUENCE [LARGE SCALE GENOMIC DNA]</scope>
    <source>
        <strain>AKU_12601</strain>
    </source>
</reference>